<reference key="1">
    <citation type="journal article" date="2005" name="Nat. Biotechnol.">
        <title>Complete genome sequence of the plant commensal Pseudomonas fluorescens Pf-5.</title>
        <authorList>
            <person name="Paulsen I.T."/>
            <person name="Press C.M."/>
            <person name="Ravel J."/>
            <person name="Kobayashi D.Y."/>
            <person name="Myers G.S.A."/>
            <person name="Mavrodi D.V."/>
            <person name="DeBoy R.T."/>
            <person name="Seshadri R."/>
            <person name="Ren Q."/>
            <person name="Madupu R."/>
            <person name="Dodson R.J."/>
            <person name="Durkin A.S."/>
            <person name="Brinkac L.M."/>
            <person name="Daugherty S.C."/>
            <person name="Sullivan S.A."/>
            <person name="Rosovitz M.J."/>
            <person name="Gwinn M.L."/>
            <person name="Zhou L."/>
            <person name="Schneider D.J."/>
            <person name="Cartinhour S.W."/>
            <person name="Nelson W.C."/>
            <person name="Weidman J."/>
            <person name="Watkins K."/>
            <person name="Tran K."/>
            <person name="Khouri H."/>
            <person name="Pierson E.A."/>
            <person name="Pierson L.S. III"/>
            <person name="Thomashow L.S."/>
            <person name="Loper J.E."/>
        </authorList>
    </citation>
    <scope>NUCLEOTIDE SEQUENCE [LARGE SCALE GENOMIC DNA]</scope>
    <source>
        <strain>ATCC BAA-477 / NRRL B-23932 / Pf-5</strain>
    </source>
</reference>
<dbReference type="EC" id="2.7.8.-" evidence="1"/>
<dbReference type="EMBL" id="CP000076">
    <property type="protein sequence ID" value="AAY95374.1"/>
    <property type="molecule type" value="Genomic_DNA"/>
</dbReference>
<dbReference type="RefSeq" id="WP_011064351.1">
    <property type="nucleotide sequence ID" value="NC_004129.6"/>
</dbReference>
<dbReference type="SMR" id="Q4K3D9"/>
<dbReference type="STRING" id="220664.PFL_6186"/>
<dbReference type="KEGG" id="pfl:PFL_6186"/>
<dbReference type="PATRIC" id="fig|220664.5.peg.6315"/>
<dbReference type="eggNOG" id="COG1502">
    <property type="taxonomic scope" value="Bacteria"/>
</dbReference>
<dbReference type="HOGENOM" id="CLU_038053_1_0_6"/>
<dbReference type="Proteomes" id="UP000008540">
    <property type="component" value="Chromosome"/>
</dbReference>
<dbReference type="GO" id="GO:0005886">
    <property type="term" value="C:plasma membrane"/>
    <property type="evidence" value="ECO:0007669"/>
    <property type="project" value="UniProtKB-SubCell"/>
</dbReference>
<dbReference type="GO" id="GO:0008808">
    <property type="term" value="F:cardiolipin synthase activity"/>
    <property type="evidence" value="ECO:0007669"/>
    <property type="project" value="InterPro"/>
</dbReference>
<dbReference type="GO" id="GO:0032049">
    <property type="term" value="P:cardiolipin biosynthetic process"/>
    <property type="evidence" value="ECO:0007669"/>
    <property type="project" value="InterPro"/>
</dbReference>
<dbReference type="CDD" id="cd09161">
    <property type="entry name" value="PLDc_PaCLS_like_2"/>
    <property type="match status" value="1"/>
</dbReference>
<dbReference type="FunFam" id="3.30.870.10:FF:000014">
    <property type="entry name" value="Cardiolipin synthase"/>
    <property type="match status" value="1"/>
</dbReference>
<dbReference type="FunFam" id="3.30.870.10:FF:000021">
    <property type="entry name" value="Cardiolipin synthase"/>
    <property type="match status" value="1"/>
</dbReference>
<dbReference type="Gene3D" id="3.30.870.10">
    <property type="entry name" value="Endonuclease Chain A"/>
    <property type="match status" value="2"/>
</dbReference>
<dbReference type="HAMAP" id="MF_00190">
    <property type="entry name" value="Cardiolipin_synth_ClsA"/>
    <property type="match status" value="1"/>
</dbReference>
<dbReference type="InterPro" id="IPR022924">
    <property type="entry name" value="Cardiolipin_synthase"/>
</dbReference>
<dbReference type="InterPro" id="IPR030840">
    <property type="entry name" value="CL_synthase_A"/>
</dbReference>
<dbReference type="InterPro" id="IPR027379">
    <property type="entry name" value="CLS_N"/>
</dbReference>
<dbReference type="InterPro" id="IPR025202">
    <property type="entry name" value="PLD-like_dom"/>
</dbReference>
<dbReference type="InterPro" id="IPR001736">
    <property type="entry name" value="PLipase_D/transphosphatidylase"/>
</dbReference>
<dbReference type="NCBIfam" id="TIGR04265">
    <property type="entry name" value="bac_cardiolipin"/>
    <property type="match status" value="1"/>
</dbReference>
<dbReference type="PANTHER" id="PTHR21248">
    <property type="entry name" value="CARDIOLIPIN SYNTHASE"/>
    <property type="match status" value="1"/>
</dbReference>
<dbReference type="PANTHER" id="PTHR21248:SF22">
    <property type="entry name" value="PHOSPHOLIPASE D"/>
    <property type="match status" value="1"/>
</dbReference>
<dbReference type="Pfam" id="PF13091">
    <property type="entry name" value="PLDc_2"/>
    <property type="match status" value="2"/>
</dbReference>
<dbReference type="Pfam" id="PF13396">
    <property type="entry name" value="PLDc_N"/>
    <property type="match status" value="1"/>
</dbReference>
<dbReference type="SMART" id="SM00155">
    <property type="entry name" value="PLDc"/>
    <property type="match status" value="2"/>
</dbReference>
<dbReference type="SUPFAM" id="SSF56024">
    <property type="entry name" value="Phospholipase D/nuclease"/>
    <property type="match status" value="2"/>
</dbReference>
<dbReference type="PROSITE" id="PS50035">
    <property type="entry name" value="PLD"/>
    <property type="match status" value="2"/>
</dbReference>
<proteinExistence type="inferred from homology"/>
<sequence length="479" mass="53996">MDYFGPHIFGYLIALLHFLGLIAAIHAVLTVRTAQGAIAWALSLLFMPYLTLIPYLVFGRSTFDAYIQARRQANVEMHKAINELNWRPWVEEALTARASKAYASLRAMPKLGRMPCLANNQVRLLVNGDATFEAIFNAIRRSHKAVLIQFFIIHDDDLGRRLQRLLLEKAAEGVSIHLLYDRIGSHSLPASYVQTLRDAGVQVHAFATRSGWLNRFQVNFRNHRKIVVVDGMLGFVGGHNVGDEYLGKKPPLAPWRDTHVQVSGPVVACLQESFAEDWFWAARELPPLILPDTYPDDGVLCQLLASGPADAYETCSLFFVEAIHAATERVWITSPYFIPDEAVFAALRLAVLRDVDVRILLPARPDHRIVYAASSLYAFEAVRAGVRVFRYQPGFLHQKVVLIDNEISAIGSANLDNRSFRLNFEVMLLTVDDDFATEVEHMLEADFAKAREIAKEESRQTHRLQQLGMRVARLISPIL</sequence>
<gene>
    <name evidence="1" type="primary">clsA</name>
    <name type="synonym">cls</name>
    <name type="ordered locus">PFL_6186</name>
</gene>
<keyword id="KW-0997">Cell inner membrane</keyword>
<keyword id="KW-1003">Cell membrane</keyword>
<keyword id="KW-0444">Lipid biosynthesis</keyword>
<keyword id="KW-0443">Lipid metabolism</keyword>
<keyword id="KW-0472">Membrane</keyword>
<keyword id="KW-0594">Phospholipid biosynthesis</keyword>
<keyword id="KW-1208">Phospholipid metabolism</keyword>
<keyword id="KW-0677">Repeat</keyword>
<keyword id="KW-0808">Transferase</keyword>
<keyword id="KW-0812">Transmembrane</keyword>
<keyword id="KW-1133">Transmembrane helix</keyword>
<name>CLSA_PSEF5</name>
<comment type="function">
    <text evidence="1">Catalyzes the reversible phosphatidyl group transfer from one phosphatidylglycerol molecule to another to form cardiolipin (CL) (diphosphatidylglycerol) and glycerol.</text>
</comment>
<comment type="catalytic activity">
    <reaction evidence="1">
        <text>2 a 1,2-diacyl-sn-glycero-3-phospho-(1'-sn-glycerol) = a cardiolipin + glycerol</text>
        <dbReference type="Rhea" id="RHEA:31451"/>
        <dbReference type="ChEBI" id="CHEBI:17754"/>
        <dbReference type="ChEBI" id="CHEBI:62237"/>
        <dbReference type="ChEBI" id="CHEBI:64716"/>
    </reaction>
</comment>
<comment type="subcellular location">
    <subcellularLocation>
        <location evidence="1">Cell inner membrane</location>
        <topology evidence="1">Multi-pass membrane protein</topology>
    </subcellularLocation>
</comment>
<comment type="similarity">
    <text evidence="1">Belongs to the phospholipase D family. Cardiolipin synthase subfamily. ClsA sub-subfamily.</text>
</comment>
<protein>
    <recommendedName>
        <fullName evidence="1">Cardiolipin synthase A</fullName>
        <shortName evidence="1">CL synthase</shortName>
        <ecNumber evidence="1">2.7.8.-</ecNumber>
    </recommendedName>
</protein>
<feature type="chain" id="PRO_1000077502" description="Cardiolipin synthase A">
    <location>
        <begin position="1"/>
        <end position="479"/>
    </location>
</feature>
<feature type="transmembrane region" description="Helical" evidence="1">
    <location>
        <begin position="8"/>
        <end position="28"/>
    </location>
</feature>
<feature type="transmembrane region" description="Helical" evidence="1">
    <location>
        <begin position="38"/>
        <end position="58"/>
    </location>
</feature>
<feature type="domain" description="PLD phosphodiesterase 1" evidence="1">
    <location>
        <begin position="218"/>
        <end position="245"/>
    </location>
</feature>
<feature type="domain" description="PLD phosphodiesterase 2" evidence="1">
    <location>
        <begin position="392"/>
        <end position="419"/>
    </location>
</feature>
<feature type="active site" evidence="1">
    <location>
        <position position="223"/>
    </location>
</feature>
<feature type="active site" evidence="1">
    <location>
        <position position="225"/>
    </location>
</feature>
<feature type="active site" evidence="1">
    <location>
        <position position="230"/>
    </location>
</feature>
<feature type="active site" evidence="1">
    <location>
        <position position="397"/>
    </location>
</feature>
<feature type="active site" evidence="1">
    <location>
        <position position="399"/>
    </location>
</feature>
<feature type="active site" evidence="1">
    <location>
        <position position="404"/>
    </location>
</feature>
<evidence type="ECO:0000255" key="1">
    <source>
        <dbReference type="HAMAP-Rule" id="MF_00190"/>
    </source>
</evidence>
<accession>Q4K3D9</accession>
<organism>
    <name type="scientific">Pseudomonas fluorescens (strain ATCC BAA-477 / NRRL B-23932 / Pf-5)</name>
    <dbReference type="NCBI Taxonomy" id="220664"/>
    <lineage>
        <taxon>Bacteria</taxon>
        <taxon>Pseudomonadati</taxon>
        <taxon>Pseudomonadota</taxon>
        <taxon>Gammaproteobacteria</taxon>
        <taxon>Pseudomonadales</taxon>
        <taxon>Pseudomonadaceae</taxon>
        <taxon>Pseudomonas</taxon>
    </lineage>
</organism>